<keyword id="KW-0004">4Fe-4S</keyword>
<keyword id="KW-0028">Amino-acid biosynthesis</keyword>
<keyword id="KW-0100">Branched-chain amino acid biosynthesis</keyword>
<keyword id="KW-0408">Iron</keyword>
<keyword id="KW-0411">Iron-sulfur</keyword>
<keyword id="KW-0432">Leucine biosynthesis</keyword>
<keyword id="KW-0456">Lyase</keyword>
<keyword id="KW-0479">Metal-binding</keyword>
<gene>
    <name evidence="1" type="primary">leuC</name>
    <name type="ordered locus">BR1906</name>
    <name type="ordered locus">BS1330_I1900</name>
</gene>
<protein>
    <recommendedName>
        <fullName evidence="1">3-isopropylmalate dehydratase large subunit</fullName>
        <ecNumber evidence="1">4.2.1.33</ecNumber>
    </recommendedName>
    <alternativeName>
        <fullName evidence="1">Alpha-IPM isomerase</fullName>
        <shortName evidence="1">IPMI</shortName>
    </alternativeName>
    <alternativeName>
        <fullName evidence="1">Isopropylmalate isomerase</fullName>
    </alternativeName>
</protein>
<sequence>MSAPRTLYDKIWDDHVVDQQEDGTCLLYIDRHLVHEVTSPQAFEGLRMAGRPVRHPEKTLAVVDHNVPTSPDRINGIQNEESRIQVEALARNAADFGVEYYSERDKRQGIVHIVGPEQGFTLPGMTIVCGDSHTSTHGAFGALAHGIGTSEVEHVLATQTLIQKKAKNMLVRVDGKLPAGVTAKDIVLAIIGEIGTAGGTGYVIEYAGEAIRSLSMEGRMTICNMSIEGGARAGLIAPDETTFEYIKGRPRAPQGETLEQAINYWKTLHSDEGAHFDKIVTLDAGSLPPIVSWGSSPEDVVSVTGVVPNPDDIADETKRASKWRALDYMGLKPGTKITDIAVDRVFIGSCTNGRIEDLRAAAKVVEGKKVAPTVNAMIVPGSGLVKEQAEAEGLHKIFIEAGFDWREPGCSMCLAMNDDRLKPGERCASTSNRNFEGRQGFKGRTHLVSPAMAAAAAIAGHFVDIRAWK</sequence>
<dbReference type="EC" id="4.2.1.33" evidence="1"/>
<dbReference type="EMBL" id="AE014291">
    <property type="protein sequence ID" value="AAN30799.1"/>
    <property type="molecule type" value="Genomic_DNA"/>
</dbReference>
<dbReference type="EMBL" id="CP002997">
    <property type="protein sequence ID" value="AEM19216.1"/>
    <property type="molecule type" value="Genomic_DNA"/>
</dbReference>
<dbReference type="RefSeq" id="WP_002964974.1">
    <property type="nucleotide sequence ID" value="NZ_KN046804.1"/>
</dbReference>
<dbReference type="SMR" id="Q8FYG9"/>
<dbReference type="GeneID" id="93017762"/>
<dbReference type="KEGG" id="bms:BR1906"/>
<dbReference type="KEGG" id="bsi:BS1330_I1900"/>
<dbReference type="PATRIC" id="fig|204722.21.peg.2545"/>
<dbReference type="HOGENOM" id="CLU_006714_3_4_5"/>
<dbReference type="PhylomeDB" id="Q8FYG9"/>
<dbReference type="UniPathway" id="UPA00048">
    <property type="reaction ID" value="UER00071"/>
</dbReference>
<dbReference type="PRO" id="PR:Q8FYG9"/>
<dbReference type="Proteomes" id="UP000007104">
    <property type="component" value="Chromosome I"/>
</dbReference>
<dbReference type="GO" id="GO:0003861">
    <property type="term" value="F:3-isopropylmalate dehydratase activity"/>
    <property type="evidence" value="ECO:0007669"/>
    <property type="project" value="UniProtKB-UniRule"/>
</dbReference>
<dbReference type="GO" id="GO:0051539">
    <property type="term" value="F:4 iron, 4 sulfur cluster binding"/>
    <property type="evidence" value="ECO:0007669"/>
    <property type="project" value="UniProtKB-KW"/>
</dbReference>
<dbReference type="GO" id="GO:0046872">
    <property type="term" value="F:metal ion binding"/>
    <property type="evidence" value="ECO:0007669"/>
    <property type="project" value="UniProtKB-KW"/>
</dbReference>
<dbReference type="GO" id="GO:0009098">
    <property type="term" value="P:L-leucine biosynthetic process"/>
    <property type="evidence" value="ECO:0007669"/>
    <property type="project" value="UniProtKB-UniRule"/>
</dbReference>
<dbReference type="CDD" id="cd01583">
    <property type="entry name" value="IPMI"/>
    <property type="match status" value="1"/>
</dbReference>
<dbReference type="FunFam" id="3.30.499.10:FF:000006">
    <property type="entry name" value="3-isopropylmalate dehydratase large subunit"/>
    <property type="match status" value="1"/>
</dbReference>
<dbReference type="FunFam" id="3.30.499.10:FF:000007">
    <property type="entry name" value="3-isopropylmalate dehydratase large subunit"/>
    <property type="match status" value="1"/>
</dbReference>
<dbReference type="Gene3D" id="3.30.499.10">
    <property type="entry name" value="Aconitase, domain 3"/>
    <property type="match status" value="2"/>
</dbReference>
<dbReference type="HAMAP" id="MF_01026">
    <property type="entry name" value="LeuC_type1"/>
    <property type="match status" value="1"/>
</dbReference>
<dbReference type="InterPro" id="IPR004430">
    <property type="entry name" value="3-IsopropMal_deHydase_lsu"/>
</dbReference>
<dbReference type="InterPro" id="IPR015931">
    <property type="entry name" value="Acnase/IPM_dHydase_lsu_aba_1/3"/>
</dbReference>
<dbReference type="InterPro" id="IPR001030">
    <property type="entry name" value="Acoase/IPM_deHydtase_lsu_aba"/>
</dbReference>
<dbReference type="InterPro" id="IPR018136">
    <property type="entry name" value="Aconitase_4Fe-4S_BS"/>
</dbReference>
<dbReference type="InterPro" id="IPR036008">
    <property type="entry name" value="Aconitase_4Fe-4S_dom"/>
</dbReference>
<dbReference type="InterPro" id="IPR050067">
    <property type="entry name" value="IPM_dehydratase_rel_enz"/>
</dbReference>
<dbReference type="InterPro" id="IPR033941">
    <property type="entry name" value="IPMI_cat"/>
</dbReference>
<dbReference type="NCBIfam" id="TIGR00170">
    <property type="entry name" value="leuC"/>
    <property type="match status" value="1"/>
</dbReference>
<dbReference type="NCBIfam" id="NF004016">
    <property type="entry name" value="PRK05478.1"/>
    <property type="match status" value="1"/>
</dbReference>
<dbReference type="NCBIfam" id="NF009116">
    <property type="entry name" value="PRK12466.1"/>
    <property type="match status" value="1"/>
</dbReference>
<dbReference type="PANTHER" id="PTHR43822:SF9">
    <property type="entry name" value="3-ISOPROPYLMALATE DEHYDRATASE"/>
    <property type="match status" value="1"/>
</dbReference>
<dbReference type="PANTHER" id="PTHR43822">
    <property type="entry name" value="HOMOACONITASE, MITOCHONDRIAL-RELATED"/>
    <property type="match status" value="1"/>
</dbReference>
<dbReference type="Pfam" id="PF00330">
    <property type="entry name" value="Aconitase"/>
    <property type="match status" value="1"/>
</dbReference>
<dbReference type="PRINTS" id="PR00415">
    <property type="entry name" value="ACONITASE"/>
</dbReference>
<dbReference type="SUPFAM" id="SSF53732">
    <property type="entry name" value="Aconitase iron-sulfur domain"/>
    <property type="match status" value="1"/>
</dbReference>
<dbReference type="PROSITE" id="PS00450">
    <property type="entry name" value="ACONITASE_1"/>
    <property type="match status" value="1"/>
</dbReference>
<dbReference type="PROSITE" id="PS01244">
    <property type="entry name" value="ACONITASE_2"/>
    <property type="match status" value="1"/>
</dbReference>
<accession>Q8FYG9</accession>
<accession>G0K850</accession>
<proteinExistence type="inferred from homology"/>
<comment type="function">
    <text evidence="1">Catalyzes the isomerization between 2-isopropylmalate and 3-isopropylmalate, via the formation of 2-isopropylmaleate.</text>
</comment>
<comment type="catalytic activity">
    <reaction evidence="1">
        <text>(2R,3S)-3-isopropylmalate = (2S)-2-isopropylmalate</text>
        <dbReference type="Rhea" id="RHEA:32287"/>
        <dbReference type="ChEBI" id="CHEBI:1178"/>
        <dbReference type="ChEBI" id="CHEBI:35121"/>
        <dbReference type="EC" id="4.2.1.33"/>
    </reaction>
</comment>
<comment type="cofactor">
    <cofactor evidence="1">
        <name>[4Fe-4S] cluster</name>
        <dbReference type="ChEBI" id="CHEBI:49883"/>
    </cofactor>
    <text evidence="1">Binds 1 [4Fe-4S] cluster per subunit.</text>
</comment>
<comment type="pathway">
    <text evidence="1">Amino-acid biosynthesis; L-leucine biosynthesis; L-leucine from 3-methyl-2-oxobutanoate: step 2/4.</text>
</comment>
<comment type="subunit">
    <text evidence="1">Heterodimer of LeuC and LeuD.</text>
</comment>
<comment type="similarity">
    <text evidence="1">Belongs to the aconitase/IPM isomerase family. LeuC type 1 subfamily.</text>
</comment>
<organism>
    <name type="scientific">Brucella suis biovar 1 (strain 1330)</name>
    <dbReference type="NCBI Taxonomy" id="204722"/>
    <lineage>
        <taxon>Bacteria</taxon>
        <taxon>Pseudomonadati</taxon>
        <taxon>Pseudomonadota</taxon>
        <taxon>Alphaproteobacteria</taxon>
        <taxon>Hyphomicrobiales</taxon>
        <taxon>Brucellaceae</taxon>
        <taxon>Brucella/Ochrobactrum group</taxon>
        <taxon>Brucella</taxon>
    </lineage>
</organism>
<name>LEUC_BRUSU</name>
<reference key="1">
    <citation type="journal article" date="2002" name="Proc. Natl. Acad. Sci. U.S.A.">
        <title>The Brucella suis genome reveals fundamental similarities between animal and plant pathogens and symbionts.</title>
        <authorList>
            <person name="Paulsen I.T."/>
            <person name="Seshadri R."/>
            <person name="Nelson K.E."/>
            <person name="Eisen J.A."/>
            <person name="Heidelberg J.F."/>
            <person name="Read T.D."/>
            <person name="Dodson R.J."/>
            <person name="Umayam L.A."/>
            <person name="Brinkac L.M."/>
            <person name="Beanan M.J."/>
            <person name="Daugherty S.C."/>
            <person name="DeBoy R.T."/>
            <person name="Durkin A.S."/>
            <person name="Kolonay J.F."/>
            <person name="Madupu R."/>
            <person name="Nelson W.C."/>
            <person name="Ayodeji B."/>
            <person name="Kraul M."/>
            <person name="Shetty J."/>
            <person name="Malek J.A."/>
            <person name="Van Aken S.E."/>
            <person name="Riedmuller S."/>
            <person name="Tettelin H."/>
            <person name="Gill S.R."/>
            <person name="White O."/>
            <person name="Salzberg S.L."/>
            <person name="Hoover D.L."/>
            <person name="Lindler L.E."/>
            <person name="Halling S.M."/>
            <person name="Boyle S.M."/>
            <person name="Fraser C.M."/>
        </authorList>
    </citation>
    <scope>NUCLEOTIDE SEQUENCE [LARGE SCALE GENOMIC DNA]</scope>
    <source>
        <strain>1330</strain>
    </source>
</reference>
<reference key="2">
    <citation type="journal article" date="2011" name="J. Bacteriol.">
        <title>Revised genome sequence of Brucella suis 1330.</title>
        <authorList>
            <person name="Tae H."/>
            <person name="Shallom S."/>
            <person name="Settlage R."/>
            <person name="Preston D."/>
            <person name="Adams L.G."/>
            <person name="Garner H.R."/>
        </authorList>
    </citation>
    <scope>NUCLEOTIDE SEQUENCE [LARGE SCALE GENOMIC DNA]</scope>
    <source>
        <strain>1330</strain>
    </source>
</reference>
<feature type="chain" id="PRO_0000076714" description="3-isopropylmalate dehydratase large subunit">
    <location>
        <begin position="1"/>
        <end position="469"/>
    </location>
</feature>
<feature type="binding site" evidence="1">
    <location>
        <position position="350"/>
    </location>
    <ligand>
        <name>[4Fe-4S] cluster</name>
        <dbReference type="ChEBI" id="CHEBI:49883"/>
    </ligand>
</feature>
<feature type="binding site" evidence="1">
    <location>
        <position position="410"/>
    </location>
    <ligand>
        <name>[4Fe-4S] cluster</name>
        <dbReference type="ChEBI" id="CHEBI:49883"/>
    </ligand>
</feature>
<feature type="binding site" evidence="1">
    <location>
        <position position="413"/>
    </location>
    <ligand>
        <name>[4Fe-4S] cluster</name>
        <dbReference type="ChEBI" id="CHEBI:49883"/>
    </ligand>
</feature>
<evidence type="ECO:0000255" key="1">
    <source>
        <dbReference type="HAMAP-Rule" id="MF_01026"/>
    </source>
</evidence>